<protein>
    <recommendedName>
        <fullName>Myeloid differentiation primary response protein MyD88</fullName>
    </recommendedName>
</protein>
<evidence type="ECO:0000250" key="1"/>
<evidence type="ECO:0000250" key="2">
    <source>
        <dbReference type="UniProtKB" id="P22366"/>
    </source>
</evidence>
<evidence type="ECO:0000250" key="3">
    <source>
        <dbReference type="UniProtKB" id="Q99836"/>
    </source>
</evidence>
<evidence type="ECO:0000255" key="4">
    <source>
        <dbReference type="PROSITE-ProRule" id="PRU00064"/>
    </source>
</evidence>
<evidence type="ECO:0000255" key="5">
    <source>
        <dbReference type="PROSITE-ProRule" id="PRU00204"/>
    </source>
</evidence>
<gene>
    <name type="primary">MYD88</name>
</gene>
<organism>
    <name type="scientific">Macaca mulatta</name>
    <name type="common">Rhesus macaque</name>
    <dbReference type="NCBI Taxonomy" id="9544"/>
    <lineage>
        <taxon>Eukaryota</taxon>
        <taxon>Metazoa</taxon>
        <taxon>Chordata</taxon>
        <taxon>Craniata</taxon>
        <taxon>Vertebrata</taxon>
        <taxon>Euteleostomi</taxon>
        <taxon>Mammalia</taxon>
        <taxon>Eutheria</taxon>
        <taxon>Euarchontoglires</taxon>
        <taxon>Primates</taxon>
        <taxon>Haplorrhini</taxon>
        <taxon>Catarrhini</taxon>
        <taxon>Cercopithecidae</taxon>
        <taxon>Cercopithecinae</taxon>
        <taxon>Macaca</taxon>
    </lineage>
</organism>
<accession>B3Y683</accession>
<reference key="1">
    <citation type="journal article" date="2008" name="Immunogenetics">
        <title>Natural selection in the TLR-related genes in the course of primate evolution.</title>
        <authorList>
            <person name="Nakajima T."/>
            <person name="Ohtani H."/>
            <person name="Satta Y."/>
            <person name="Uno Y."/>
            <person name="Akari H."/>
            <person name="Ishida T."/>
            <person name="Kimura A."/>
        </authorList>
    </citation>
    <scope>NUCLEOTIDE SEQUENCE [MRNA]</scope>
</reference>
<reference key="2">
    <citation type="journal article" date="2008" name="Nat. Med.">
        <title>Divergent TLR7 and TLR9 signaling and type I interferon production distinguish pathogenic and nonpathogenic AIDS virus infections.</title>
        <authorList>
            <person name="Mandl J.N."/>
            <person name="Barry A.P."/>
            <person name="Vanderford T.H."/>
            <person name="Kozyr N."/>
            <person name="Chavan R."/>
            <person name="Klucking S."/>
            <person name="Barrat F.J."/>
            <person name="Coffman R.L."/>
            <person name="Staprans S.I."/>
            <person name="Feinberg M.B."/>
        </authorList>
    </citation>
    <scope>NUCLEOTIDE SEQUENCE [MRNA]</scope>
</reference>
<proteinExistence type="evidence at transcript level"/>
<keyword id="KW-0963">Cytoplasm</keyword>
<keyword id="KW-0391">Immunity</keyword>
<keyword id="KW-0395">Inflammatory response</keyword>
<keyword id="KW-0399">Innate immunity</keyword>
<keyword id="KW-0539">Nucleus</keyword>
<keyword id="KW-0597">Phosphoprotein</keyword>
<keyword id="KW-1185">Reference proteome</keyword>
<keyword id="KW-0832">Ubl conjugation</keyword>
<comment type="function">
    <text evidence="2 3">Adapter protein involved in the Toll-like receptor and IL-1 receptor signaling pathway in the innate immune response. Acts via IRAK1, IRAK2, IRF7 and TRAF6, leading to NF-kappa-B activation, cytokine secretion and the inflammatory response. Increases IL-8 transcription. Involved in IL-18-mediated signaling pathway. Activates IRF1 resulting in its rapid migration into the nucleus to mediate an efficient induction of IFN-beta, NOS2/INOS, and IL12A genes. Upon TLR8 activation by GU-rich single-stranded RNA (GU-rich RNA) derived from viruses, induces IL1B release through NLRP3 inflammasome activation (By similarity). MyD88-mediated signaling in intestinal epithelial cells is crucial for maintenance of gut homeostasis and controls the expression of the antimicrobial lectin REG3G in the small intestine (By similarity).</text>
</comment>
<comment type="subunit">
    <text evidence="3">Homodimer. Also forms heterodimers with TIRAP. Binds to TLR2, TLR4, IRAK1, IRAK2 and IRAK4 via their respective TIR domains. Interacts with IL18R1. Interacts with BMX, IL1RL1, IKBKE and IRF7. Interacts with LRRFIP1 and LRRFIP2; this interaction positively regulates Toll-like receptor (TLR) signaling in response to agonist. Interacts with FLII. LRRFIP1 and LRRFIP2 compete with FLII for MYD88-binding. Interacts with IRF1. Upon IL1B treatment, forms a complex with PELI1, IRAK1, IRAK4 and TRAF6; this complex recruits MAP3K7/TAK1, TAB1 and TAB2 to mediate NF-kappa-B activation. Direct binding of SMAD6 to PELI1 prevents the complex formation and hence negatively regulates IL1R-TLR signaling and eventually NF-kappa-B-mediated gene expression. May interact with PIK3AP1. Interacts (via TIR domain) with DHX9 (via H2A and OB-fold regions); this interaction is direct. Interacts with OTUD4 deubiquitinase; the interaction is direct.</text>
</comment>
<comment type="subcellular location">
    <subcellularLocation>
        <location evidence="3">Cytoplasm</location>
    </subcellularLocation>
    <subcellularLocation>
        <location evidence="3">Nucleus</location>
    </subcellularLocation>
</comment>
<comment type="domain">
    <text evidence="2">The intermediate domain (ID) is required for the phosphorylation and activation of IRAK.</text>
</comment>
<comment type="PTM">
    <text evidence="3">Ubiquitinated; undergoes 'Lys-63'-linked polyubiquitination. OTUD4 specifically hydrolyzes 'Lys-63'-linked polyubiquitinated MYD88. Deubiquitinated by USP3 that cleaves 'Lys-63'-linked ubiquitin chains leading to inhibition of MYD88-induced NF-kappa-B signaling.</text>
</comment>
<dbReference type="EMBL" id="EU204914">
    <property type="protein sequence ID" value="ABY64972.1"/>
    <property type="molecule type" value="mRNA"/>
</dbReference>
<dbReference type="EMBL" id="AB446476">
    <property type="protein sequence ID" value="BAG55253.1"/>
    <property type="molecule type" value="mRNA"/>
</dbReference>
<dbReference type="RefSeq" id="NP_001124153.1">
    <property type="nucleotide sequence ID" value="NM_001130681.1"/>
</dbReference>
<dbReference type="SMR" id="B3Y683"/>
<dbReference type="FunCoup" id="B3Y683">
    <property type="interactions" value="1601"/>
</dbReference>
<dbReference type="STRING" id="9544.ENSMMUP00000001339"/>
<dbReference type="PaxDb" id="9544-ENSMMUP00000001339"/>
<dbReference type="GeneID" id="696494"/>
<dbReference type="KEGG" id="mcc:696494"/>
<dbReference type="CTD" id="4615"/>
<dbReference type="eggNOG" id="ENOG502QWKI">
    <property type="taxonomic scope" value="Eukaryota"/>
</dbReference>
<dbReference type="HOGENOM" id="CLU_045884_0_0_1"/>
<dbReference type="InParanoid" id="B3Y683"/>
<dbReference type="OrthoDB" id="10037120at2759"/>
<dbReference type="TreeFam" id="TF326264"/>
<dbReference type="Proteomes" id="UP000006718">
    <property type="component" value="Unassembled WGS sequence"/>
</dbReference>
<dbReference type="GO" id="GO:0005737">
    <property type="term" value="C:cytoplasm"/>
    <property type="evidence" value="ECO:0007669"/>
    <property type="project" value="UniProtKB-SubCell"/>
</dbReference>
<dbReference type="GO" id="GO:0005634">
    <property type="term" value="C:nucleus"/>
    <property type="evidence" value="ECO:0007669"/>
    <property type="project" value="UniProtKB-SubCell"/>
</dbReference>
<dbReference type="GO" id="GO:0005886">
    <property type="term" value="C:plasma membrane"/>
    <property type="evidence" value="ECO:0000318"/>
    <property type="project" value="GO_Central"/>
</dbReference>
<dbReference type="GO" id="GO:0070976">
    <property type="term" value="F:TIR domain binding"/>
    <property type="evidence" value="ECO:0007669"/>
    <property type="project" value="InterPro"/>
</dbReference>
<dbReference type="GO" id="GO:0035325">
    <property type="term" value="F:Toll-like receptor binding"/>
    <property type="evidence" value="ECO:0000318"/>
    <property type="project" value="GO_Central"/>
</dbReference>
<dbReference type="GO" id="GO:0050830">
    <property type="term" value="P:defense response to Gram-positive bacterium"/>
    <property type="evidence" value="ECO:0000250"/>
    <property type="project" value="UniProtKB"/>
</dbReference>
<dbReference type="GO" id="GO:0051607">
    <property type="term" value="P:defense response to virus"/>
    <property type="evidence" value="ECO:0000250"/>
    <property type="project" value="UniProtKB"/>
</dbReference>
<dbReference type="GO" id="GO:0006954">
    <property type="term" value="P:inflammatory response"/>
    <property type="evidence" value="ECO:0007669"/>
    <property type="project" value="UniProtKB-KW"/>
</dbReference>
<dbReference type="GO" id="GO:0045087">
    <property type="term" value="P:innate immune response"/>
    <property type="evidence" value="ECO:0000318"/>
    <property type="project" value="GO_Central"/>
</dbReference>
<dbReference type="GO" id="GO:0002755">
    <property type="term" value="P:MyD88-dependent toll-like receptor signaling pathway"/>
    <property type="evidence" value="ECO:0007669"/>
    <property type="project" value="InterPro"/>
</dbReference>
<dbReference type="GO" id="GO:0043123">
    <property type="term" value="P:positive regulation of canonical NF-kappaB signal transduction"/>
    <property type="evidence" value="ECO:0007669"/>
    <property type="project" value="InterPro"/>
</dbReference>
<dbReference type="GO" id="GO:0032731">
    <property type="term" value="P:positive regulation of interleukin-1 beta production"/>
    <property type="evidence" value="ECO:0000250"/>
    <property type="project" value="UniProtKB"/>
</dbReference>
<dbReference type="GO" id="GO:1900227">
    <property type="term" value="P:positive regulation of NLRP3 inflammasome complex assembly"/>
    <property type="evidence" value="ECO:0000250"/>
    <property type="project" value="UniProtKB"/>
</dbReference>
<dbReference type="GO" id="GO:0008063">
    <property type="term" value="P:Toll signaling pathway"/>
    <property type="evidence" value="ECO:0000318"/>
    <property type="project" value="GO_Central"/>
</dbReference>
<dbReference type="GO" id="GO:0034142">
    <property type="term" value="P:toll-like receptor 4 signaling pathway"/>
    <property type="evidence" value="ECO:0000318"/>
    <property type="project" value="GO_Central"/>
</dbReference>
<dbReference type="GO" id="GO:0034158">
    <property type="term" value="P:toll-like receptor 8 signaling pathway"/>
    <property type="evidence" value="ECO:0000250"/>
    <property type="project" value="UniProtKB"/>
</dbReference>
<dbReference type="CDD" id="cd08312">
    <property type="entry name" value="Death_MyD88"/>
    <property type="match status" value="1"/>
</dbReference>
<dbReference type="FunFam" id="1.10.533.10:FF:000029">
    <property type="entry name" value="Myeloid differentiation primary response protein MyD88"/>
    <property type="match status" value="1"/>
</dbReference>
<dbReference type="FunFam" id="3.40.50.10140:FF:000005">
    <property type="entry name" value="Myeloid differentiation primary response protein MyD88"/>
    <property type="match status" value="1"/>
</dbReference>
<dbReference type="Gene3D" id="1.10.533.10">
    <property type="entry name" value="Death Domain, Fas"/>
    <property type="match status" value="1"/>
</dbReference>
<dbReference type="Gene3D" id="3.40.50.10140">
    <property type="entry name" value="Toll/interleukin-1 receptor homology (TIR) domain"/>
    <property type="match status" value="1"/>
</dbReference>
<dbReference type="InterPro" id="IPR011029">
    <property type="entry name" value="DEATH-like_dom_sf"/>
</dbReference>
<dbReference type="InterPro" id="IPR000488">
    <property type="entry name" value="Death_dom"/>
</dbReference>
<dbReference type="InterPro" id="IPR034249">
    <property type="entry name" value="MyD88_Death"/>
</dbReference>
<dbReference type="InterPro" id="IPR017281">
    <property type="entry name" value="Myelin_different_resp_MyD88"/>
</dbReference>
<dbReference type="InterPro" id="IPR000157">
    <property type="entry name" value="TIR_dom"/>
</dbReference>
<dbReference type="InterPro" id="IPR035897">
    <property type="entry name" value="Toll_tir_struct_dom_sf"/>
</dbReference>
<dbReference type="PANTHER" id="PTHR15079">
    <property type="entry name" value="MYD88"/>
    <property type="match status" value="1"/>
</dbReference>
<dbReference type="PANTHER" id="PTHR15079:SF3">
    <property type="entry name" value="MYELOID DIFFERENTIATION PRIMARY RESPONSE PROTEIN MYD88"/>
    <property type="match status" value="1"/>
</dbReference>
<dbReference type="Pfam" id="PF00531">
    <property type="entry name" value="Death"/>
    <property type="match status" value="1"/>
</dbReference>
<dbReference type="Pfam" id="PF13676">
    <property type="entry name" value="TIR_2"/>
    <property type="match status" value="1"/>
</dbReference>
<dbReference type="PIRSF" id="PIRSF037756">
    <property type="entry name" value="MyD88"/>
    <property type="match status" value="1"/>
</dbReference>
<dbReference type="SMART" id="SM00005">
    <property type="entry name" value="DEATH"/>
    <property type="match status" value="1"/>
</dbReference>
<dbReference type="SMART" id="SM00255">
    <property type="entry name" value="TIR"/>
    <property type="match status" value="1"/>
</dbReference>
<dbReference type="SUPFAM" id="SSF47986">
    <property type="entry name" value="DEATH domain"/>
    <property type="match status" value="1"/>
</dbReference>
<dbReference type="SUPFAM" id="SSF52200">
    <property type="entry name" value="Toll/Interleukin receptor TIR domain"/>
    <property type="match status" value="1"/>
</dbReference>
<dbReference type="PROSITE" id="PS50017">
    <property type="entry name" value="DEATH_DOMAIN"/>
    <property type="match status" value="1"/>
</dbReference>
<dbReference type="PROSITE" id="PS50104">
    <property type="entry name" value="TIR"/>
    <property type="match status" value="1"/>
</dbReference>
<name>MYD88_MACMU</name>
<feature type="chain" id="PRO_0000393133" description="Myeloid differentiation primary response protein MyD88">
    <location>
        <begin position="1"/>
        <end position="296"/>
    </location>
</feature>
<feature type="domain" description="Death" evidence="4">
    <location>
        <begin position="32"/>
        <end position="109"/>
    </location>
</feature>
<feature type="domain" description="TIR" evidence="5">
    <location>
        <begin position="159"/>
        <end position="293"/>
    </location>
</feature>
<feature type="region of interest" description="Intermediate domain" evidence="1">
    <location>
        <begin position="110"/>
        <end position="155"/>
    </location>
</feature>
<feature type="modified residue" description="Phosphoserine" evidence="3">
    <location>
        <position position="244"/>
    </location>
</feature>
<sequence>MAAGGPGTEPAAPVSSTSSLPLAALNMRVRRRLSLFLNVRTQVAADWTALAEEMDFEYLEIRQLETHADPTGRLLDAWQGRPGASVGRLLELLTKLGRDDVLLELGPSIEEDCQKYILKQQQEEAEKPLQVAAVDSSVPRTAELAGITTLDDPLGHMPERFDAFICYCPSDIQFVQEMIRQLEQTNYRLKLCVSDRDVLPGTCVWSIASELIEKRCRRMVVVVSDDYLQSKECDFQTKFALSLSPGAHQKRLIPIKYKAMKKEFPSILRFITVCDYTNPCTKSWFWTRLAKALSLP</sequence>